<accession>B2GAI0</accession>
<reference key="1">
    <citation type="journal article" date="2008" name="DNA Res.">
        <title>Comparative genome analysis of Lactobacillus reuteri and Lactobacillus fermentum reveal a genomic island for reuterin and cobalamin production.</title>
        <authorList>
            <person name="Morita H."/>
            <person name="Toh H."/>
            <person name="Fukuda S."/>
            <person name="Horikawa H."/>
            <person name="Oshima K."/>
            <person name="Suzuki T."/>
            <person name="Murakami M."/>
            <person name="Hisamatsu S."/>
            <person name="Kato Y."/>
            <person name="Takizawa T."/>
            <person name="Fukuoka H."/>
            <person name="Yoshimura T."/>
            <person name="Itoh K."/>
            <person name="O'Sullivan D.J."/>
            <person name="McKay L.L."/>
            <person name="Ohno H."/>
            <person name="Kikuchi J."/>
            <person name="Masaoka T."/>
            <person name="Hattori M."/>
        </authorList>
    </citation>
    <scope>NUCLEOTIDE SEQUENCE [LARGE SCALE GENOMIC DNA]</scope>
    <source>
        <strain>NBRC 3956 / LMG 18251</strain>
    </source>
</reference>
<protein>
    <recommendedName>
        <fullName evidence="1">Chaperonin GroEL</fullName>
        <ecNumber evidence="1">5.6.1.7</ecNumber>
    </recommendedName>
    <alternativeName>
        <fullName evidence="1">60 kDa chaperonin</fullName>
    </alternativeName>
    <alternativeName>
        <fullName evidence="1">Chaperonin-60</fullName>
        <shortName evidence="1">Cpn60</shortName>
    </alternativeName>
</protein>
<evidence type="ECO:0000255" key="1">
    <source>
        <dbReference type="HAMAP-Rule" id="MF_00600"/>
    </source>
</evidence>
<dbReference type="EC" id="5.6.1.7" evidence="1"/>
<dbReference type="EMBL" id="AP008937">
    <property type="protein sequence ID" value="BAG26662.1"/>
    <property type="molecule type" value="Genomic_DNA"/>
</dbReference>
<dbReference type="RefSeq" id="WP_003682571.1">
    <property type="nucleotide sequence ID" value="NC_010610.1"/>
</dbReference>
<dbReference type="SMR" id="B2GAI0"/>
<dbReference type="KEGG" id="lfe:LAF_0326"/>
<dbReference type="eggNOG" id="COG0459">
    <property type="taxonomic scope" value="Bacteria"/>
</dbReference>
<dbReference type="HOGENOM" id="CLU_016503_3_0_9"/>
<dbReference type="Proteomes" id="UP000001697">
    <property type="component" value="Chromosome"/>
</dbReference>
<dbReference type="GO" id="GO:0005737">
    <property type="term" value="C:cytoplasm"/>
    <property type="evidence" value="ECO:0007669"/>
    <property type="project" value="UniProtKB-SubCell"/>
</dbReference>
<dbReference type="GO" id="GO:0005524">
    <property type="term" value="F:ATP binding"/>
    <property type="evidence" value="ECO:0007669"/>
    <property type="project" value="UniProtKB-UniRule"/>
</dbReference>
<dbReference type="GO" id="GO:0140662">
    <property type="term" value="F:ATP-dependent protein folding chaperone"/>
    <property type="evidence" value="ECO:0007669"/>
    <property type="project" value="InterPro"/>
</dbReference>
<dbReference type="GO" id="GO:0016853">
    <property type="term" value="F:isomerase activity"/>
    <property type="evidence" value="ECO:0007669"/>
    <property type="project" value="UniProtKB-KW"/>
</dbReference>
<dbReference type="GO" id="GO:0051082">
    <property type="term" value="F:unfolded protein binding"/>
    <property type="evidence" value="ECO:0007669"/>
    <property type="project" value="UniProtKB-UniRule"/>
</dbReference>
<dbReference type="GO" id="GO:0042026">
    <property type="term" value="P:protein refolding"/>
    <property type="evidence" value="ECO:0007669"/>
    <property type="project" value="UniProtKB-UniRule"/>
</dbReference>
<dbReference type="CDD" id="cd03344">
    <property type="entry name" value="GroEL"/>
    <property type="match status" value="1"/>
</dbReference>
<dbReference type="FunFam" id="3.50.7.10:FF:000001">
    <property type="entry name" value="60 kDa chaperonin"/>
    <property type="match status" value="1"/>
</dbReference>
<dbReference type="Gene3D" id="3.50.7.10">
    <property type="entry name" value="GroEL"/>
    <property type="match status" value="1"/>
</dbReference>
<dbReference type="Gene3D" id="1.10.560.10">
    <property type="entry name" value="GroEL-like equatorial domain"/>
    <property type="match status" value="1"/>
</dbReference>
<dbReference type="Gene3D" id="3.30.260.10">
    <property type="entry name" value="TCP-1-like chaperonin intermediate domain"/>
    <property type="match status" value="1"/>
</dbReference>
<dbReference type="HAMAP" id="MF_00600">
    <property type="entry name" value="CH60"/>
    <property type="match status" value="1"/>
</dbReference>
<dbReference type="InterPro" id="IPR018370">
    <property type="entry name" value="Chaperonin_Cpn60_CS"/>
</dbReference>
<dbReference type="InterPro" id="IPR001844">
    <property type="entry name" value="Cpn60/GroEL"/>
</dbReference>
<dbReference type="InterPro" id="IPR002423">
    <property type="entry name" value="Cpn60/GroEL/TCP-1"/>
</dbReference>
<dbReference type="InterPro" id="IPR027409">
    <property type="entry name" value="GroEL-like_apical_dom_sf"/>
</dbReference>
<dbReference type="InterPro" id="IPR027413">
    <property type="entry name" value="GROEL-like_equatorial_sf"/>
</dbReference>
<dbReference type="InterPro" id="IPR027410">
    <property type="entry name" value="TCP-1-like_intermed_sf"/>
</dbReference>
<dbReference type="NCBIfam" id="TIGR02348">
    <property type="entry name" value="GroEL"/>
    <property type="match status" value="1"/>
</dbReference>
<dbReference type="NCBIfam" id="NF000592">
    <property type="entry name" value="PRK00013.1"/>
    <property type="match status" value="1"/>
</dbReference>
<dbReference type="NCBIfam" id="NF009487">
    <property type="entry name" value="PRK12849.1"/>
    <property type="match status" value="1"/>
</dbReference>
<dbReference type="NCBIfam" id="NF009488">
    <property type="entry name" value="PRK12850.1"/>
    <property type="match status" value="1"/>
</dbReference>
<dbReference type="NCBIfam" id="NF009489">
    <property type="entry name" value="PRK12851.1"/>
    <property type="match status" value="1"/>
</dbReference>
<dbReference type="PANTHER" id="PTHR45633">
    <property type="entry name" value="60 KDA HEAT SHOCK PROTEIN, MITOCHONDRIAL"/>
    <property type="match status" value="1"/>
</dbReference>
<dbReference type="Pfam" id="PF00118">
    <property type="entry name" value="Cpn60_TCP1"/>
    <property type="match status" value="1"/>
</dbReference>
<dbReference type="PRINTS" id="PR00298">
    <property type="entry name" value="CHAPERONIN60"/>
</dbReference>
<dbReference type="SUPFAM" id="SSF52029">
    <property type="entry name" value="GroEL apical domain-like"/>
    <property type="match status" value="1"/>
</dbReference>
<dbReference type="SUPFAM" id="SSF48592">
    <property type="entry name" value="GroEL equatorial domain-like"/>
    <property type="match status" value="2"/>
</dbReference>
<dbReference type="PROSITE" id="PS00296">
    <property type="entry name" value="CHAPERONINS_CPN60"/>
    <property type="match status" value="1"/>
</dbReference>
<feature type="chain" id="PRO_1000130030" description="Chaperonin GroEL">
    <location>
        <begin position="1"/>
        <end position="543"/>
    </location>
</feature>
<feature type="binding site" evidence="1">
    <location>
        <begin position="29"/>
        <end position="32"/>
    </location>
    <ligand>
        <name>ATP</name>
        <dbReference type="ChEBI" id="CHEBI:30616"/>
    </ligand>
</feature>
<feature type="binding site" evidence="1">
    <location>
        <begin position="86"/>
        <end position="90"/>
    </location>
    <ligand>
        <name>ATP</name>
        <dbReference type="ChEBI" id="CHEBI:30616"/>
    </ligand>
</feature>
<feature type="binding site" evidence="1">
    <location>
        <position position="413"/>
    </location>
    <ligand>
        <name>ATP</name>
        <dbReference type="ChEBI" id="CHEBI:30616"/>
    </ligand>
</feature>
<feature type="binding site" evidence="1">
    <location>
        <begin position="478"/>
        <end position="480"/>
    </location>
    <ligand>
        <name>ATP</name>
        <dbReference type="ChEBI" id="CHEBI:30616"/>
    </ligand>
</feature>
<feature type="binding site" evidence="1">
    <location>
        <position position="494"/>
    </location>
    <ligand>
        <name>ATP</name>
        <dbReference type="ChEBI" id="CHEBI:30616"/>
    </ligand>
</feature>
<comment type="function">
    <text evidence="1">Together with its co-chaperonin GroES, plays an essential role in assisting protein folding. The GroEL-GroES system forms a nano-cage that allows encapsulation of the non-native substrate proteins and provides a physical environment optimized to promote and accelerate protein folding.</text>
</comment>
<comment type="catalytic activity">
    <reaction evidence="1">
        <text>ATP + H2O + a folded polypeptide = ADP + phosphate + an unfolded polypeptide.</text>
        <dbReference type="EC" id="5.6.1.7"/>
    </reaction>
</comment>
<comment type="subunit">
    <text evidence="1">Forms a cylinder of 14 subunits composed of two heptameric rings stacked back-to-back. Interacts with the co-chaperonin GroES.</text>
</comment>
<comment type="subcellular location">
    <subcellularLocation>
        <location evidence="1">Cytoplasm</location>
    </subcellularLocation>
</comment>
<comment type="similarity">
    <text evidence="1">Belongs to the chaperonin (HSP60) family.</text>
</comment>
<name>CH60_LIMF3</name>
<keyword id="KW-0067">ATP-binding</keyword>
<keyword id="KW-0143">Chaperone</keyword>
<keyword id="KW-0963">Cytoplasm</keyword>
<keyword id="KW-0413">Isomerase</keyword>
<keyword id="KW-0547">Nucleotide-binding</keyword>
<keyword id="KW-1185">Reference proteome</keyword>
<organism>
    <name type="scientific">Limosilactobacillus fermentum (strain NBRC 3956 / LMG 18251)</name>
    <name type="common">Lactobacillus fermentum</name>
    <dbReference type="NCBI Taxonomy" id="334390"/>
    <lineage>
        <taxon>Bacteria</taxon>
        <taxon>Bacillati</taxon>
        <taxon>Bacillota</taxon>
        <taxon>Bacilli</taxon>
        <taxon>Lactobacillales</taxon>
        <taxon>Lactobacillaceae</taxon>
        <taxon>Limosilactobacillus</taxon>
    </lineage>
</organism>
<gene>
    <name evidence="1" type="primary">groEL</name>
    <name evidence="1" type="synonym">groL</name>
    <name type="ordered locus">LAF_0326</name>
</gene>
<proteinExistence type="inferred from homology"/>
<sequence length="543" mass="56857">MAKELKFSEDARSAMLRGVDKLADTVKTTIGPKGRNVVLEQSYGSPTITNDGVTIAKSIELEDHFENMGAKLVSEVASKTNDIAGDGTTTATVLTQAIVTEGMKNVTAGANPVGIRRGIEKATAAAVEGLKKMSHDVKTKDDIAQIASISAANKEVGKLIADAMEKVGNDGVITIEDSRGVDTSVDVVEGMSFDRGYMSQYMVTDNDKMEANLDNPYVLITDKKISNIQDILPLLQSVVQEGRALLIIADDITGEALPTLVLNKIRGTFNVVAVKAPGFGDRRKAQLEDIAVLTGGTVISDDLGMQLKDATIDQLGSANKVTITKDATTIVDGSGNKEAIAERVDQIKKAIAETTSDFDKEKLQERLAKLAGGVAVVKVGAATETELKEKKYRIEDALNATRAAVQEGFVPGGGTALVNVIPALDEVEASATGDEATGIKIVKAALEAPVRQIAENAGLEGSVIVNQLKQEKPGVGYNAADDKFEDMVAAGIVDPTKVTRSALQNAASVSALLLTTEAVVADKPQPADAAPQAPVAGGMGGMM</sequence>